<comment type="function">
    <text evidence="3">Required for the insertion of integral membrane proteins into the mitochondrial inner membrane. Essential for the activity and assembly of cytochrome c oxidase. It is essential for viability while oxa101 is not. When both are deleted the cell is non-viable, suggesting that oxa101 act as a back-up for oxa102.</text>
</comment>
<comment type="subcellular location">
    <subcellularLocation>
        <location evidence="4">Mitochondrion inner membrane</location>
        <topology evidence="4">Multi-pass membrane protein</topology>
    </subcellularLocation>
</comment>
<comment type="similarity">
    <text evidence="4">Belongs to the OXA1/ALB3/YidC family.</text>
</comment>
<evidence type="ECO:0000255" key="1"/>
<evidence type="ECO:0000256" key="2">
    <source>
        <dbReference type="SAM" id="MobiDB-lite"/>
    </source>
</evidence>
<evidence type="ECO:0000269" key="3">
    <source>
    </source>
</evidence>
<evidence type="ECO:0000305" key="4"/>
<organism>
    <name type="scientific">Schizosaccharomyces pombe (strain 972 / ATCC 24843)</name>
    <name type="common">Fission yeast</name>
    <dbReference type="NCBI Taxonomy" id="284812"/>
    <lineage>
        <taxon>Eukaryota</taxon>
        <taxon>Fungi</taxon>
        <taxon>Dikarya</taxon>
        <taxon>Ascomycota</taxon>
        <taxon>Taphrinomycotina</taxon>
        <taxon>Schizosaccharomycetes</taxon>
        <taxon>Schizosaccharomycetales</taxon>
        <taxon>Schizosaccharomycetaceae</taxon>
        <taxon>Schizosaccharomyces</taxon>
    </lineage>
</organism>
<sequence length="409" mass="45361">MFSVIGRGIKFSSKSHYSVSCFLIATQGAKIRQIHTHNTFFKNFSFAKLGRNQRTSSLIKIHNSSTSFPKSRSEKVVYTPSLPLSSSVLASFSFLPHNILQNGLNTLHIWSGLPWWASIAACAVAMRIAVFPIMLKMMKTSAKLAIINPKVAEHMSVLSKAKAEGNSELMMQATTQIQNLYKVNNVNPLNLLSAPVFQGILFISFFYALKTMAGVPVEGFTDGGFWWVNDLSQPDPLHIFPVANGLLMLLNIELGSETGSNKVAMSPSMKKFFRFLCLASPLFTMNFPMAIFMYWFPSNVFSVFQGAFLRSSTIRHKLGLPEVPSAMPVPNAQNESFVKSFTDIVHGVQEKGKYPQASEILDATRFLKTDTNNEQKPTNNSTITKATTLSDNSQNDKSSSVTKPTEKKD</sequence>
<name>OXA12_SCHPO</name>
<accession>O43092</accession>
<keyword id="KW-0472">Membrane</keyword>
<keyword id="KW-0496">Mitochondrion</keyword>
<keyword id="KW-0999">Mitochondrion inner membrane</keyword>
<keyword id="KW-1185">Reference proteome</keyword>
<keyword id="KW-0809">Transit peptide</keyword>
<keyword id="KW-0812">Transmembrane</keyword>
<keyword id="KW-1133">Transmembrane helix</keyword>
<gene>
    <name type="primary">oxa102</name>
    <name type="synonym">oxa1-2</name>
    <name type="ORF">SPBC1346.02c</name>
    <name type="ORF">SPBP4H10.03</name>
</gene>
<protein>
    <recommendedName>
        <fullName>Mitochondrial inner membrane protein oxa1-2</fullName>
    </recommendedName>
    <alternativeName>
        <fullName>Cytochrome oxidase biogenesis protein 1-2</fullName>
        <shortName>Sp2</shortName>
    </alternativeName>
</protein>
<reference key="1">
    <citation type="journal article" date="2000" name="Mol. Microbiol.">
        <title>The respiratory gene OXA1 has two fission yeast orthologues which together encode a function essential for cellular viability.</title>
        <authorList>
            <person name="Bonnefoy N."/>
            <person name="Kermorgant M."/>
            <person name="Groudinsky O."/>
            <person name="Dujardin G."/>
        </authorList>
    </citation>
    <scope>NUCLEOTIDE SEQUENCE [MRNA]</scope>
    <scope>FUNCTION</scope>
    <source>
        <strain>972 / ATCC 24843</strain>
    </source>
</reference>
<reference key="2">
    <citation type="journal article" date="2002" name="Nature">
        <title>The genome sequence of Schizosaccharomyces pombe.</title>
        <authorList>
            <person name="Wood V."/>
            <person name="Gwilliam R."/>
            <person name="Rajandream M.A."/>
            <person name="Lyne M.H."/>
            <person name="Lyne R."/>
            <person name="Stewart A."/>
            <person name="Sgouros J.G."/>
            <person name="Peat N."/>
            <person name="Hayles J."/>
            <person name="Baker S.G."/>
            <person name="Basham D."/>
            <person name="Bowman S."/>
            <person name="Brooks K."/>
            <person name="Brown D."/>
            <person name="Brown S."/>
            <person name="Chillingworth T."/>
            <person name="Churcher C.M."/>
            <person name="Collins M."/>
            <person name="Connor R."/>
            <person name="Cronin A."/>
            <person name="Davis P."/>
            <person name="Feltwell T."/>
            <person name="Fraser A."/>
            <person name="Gentles S."/>
            <person name="Goble A."/>
            <person name="Hamlin N."/>
            <person name="Harris D.E."/>
            <person name="Hidalgo J."/>
            <person name="Hodgson G."/>
            <person name="Holroyd S."/>
            <person name="Hornsby T."/>
            <person name="Howarth S."/>
            <person name="Huckle E.J."/>
            <person name="Hunt S."/>
            <person name="Jagels K."/>
            <person name="James K.D."/>
            <person name="Jones L."/>
            <person name="Jones M."/>
            <person name="Leather S."/>
            <person name="McDonald S."/>
            <person name="McLean J."/>
            <person name="Mooney P."/>
            <person name="Moule S."/>
            <person name="Mungall K.L."/>
            <person name="Murphy L.D."/>
            <person name="Niblett D."/>
            <person name="Odell C."/>
            <person name="Oliver K."/>
            <person name="O'Neil S."/>
            <person name="Pearson D."/>
            <person name="Quail M.A."/>
            <person name="Rabbinowitsch E."/>
            <person name="Rutherford K.M."/>
            <person name="Rutter S."/>
            <person name="Saunders D."/>
            <person name="Seeger K."/>
            <person name="Sharp S."/>
            <person name="Skelton J."/>
            <person name="Simmonds M.N."/>
            <person name="Squares R."/>
            <person name="Squares S."/>
            <person name="Stevens K."/>
            <person name="Taylor K."/>
            <person name="Taylor R.G."/>
            <person name="Tivey A."/>
            <person name="Walsh S.V."/>
            <person name="Warren T."/>
            <person name="Whitehead S."/>
            <person name="Woodward J.R."/>
            <person name="Volckaert G."/>
            <person name="Aert R."/>
            <person name="Robben J."/>
            <person name="Grymonprez B."/>
            <person name="Weltjens I."/>
            <person name="Vanstreels E."/>
            <person name="Rieger M."/>
            <person name="Schaefer M."/>
            <person name="Mueller-Auer S."/>
            <person name="Gabel C."/>
            <person name="Fuchs M."/>
            <person name="Duesterhoeft A."/>
            <person name="Fritzc C."/>
            <person name="Holzer E."/>
            <person name="Moestl D."/>
            <person name="Hilbert H."/>
            <person name="Borzym K."/>
            <person name="Langer I."/>
            <person name="Beck A."/>
            <person name="Lehrach H."/>
            <person name="Reinhardt R."/>
            <person name="Pohl T.M."/>
            <person name="Eger P."/>
            <person name="Zimmermann W."/>
            <person name="Wedler H."/>
            <person name="Wambutt R."/>
            <person name="Purnelle B."/>
            <person name="Goffeau A."/>
            <person name="Cadieu E."/>
            <person name="Dreano S."/>
            <person name="Gloux S."/>
            <person name="Lelaure V."/>
            <person name="Mottier S."/>
            <person name="Galibert F."/>
            <person name="Aves S.J."/>
            <person name="Xiang Z."/>
            <person name="Hunt C."/>
            <person name="Moore K."/>
            <person name="Hurst S.M."/>
            <person name="Lucas M."/>
            <person name="Rochet M."/>
            <person name="Gaillardin C."/>
            <person name="Tallada V.A."/>
            <person name="Garzon A."/>
            <person name="Thode G."/>
            <person name="Daga R.R."/>
            <person name="Cruzado L."/>
            <person name="Jimenez J."/>
            <person name="Sanchez M."/>
            <person name="del Rey F."/>
            <person name="Benito J."/>
            <person name="Dominguez A."/>
            <person name="Revuelta J.L."/>
            <person name="Moreno S."/>
            <person name="Armstrong J."/>
            <person name="Forsburg S.L."/>
            <person name="Cerutti L."/>
            <person name="Lowe T."/>
            <person name="McCombie W.R."/>
            <person name="Paulsen I."/>
            <person name="Potashkin J."/>
            <person name="Shpakovski G.V."/>
            <person name="Ussery D."/>
            <person name="Barrell B.G."/>
            <person name="Nurse P."/>
        </authorList>
    </citation>
    <scope>NUCLEOTIDE SEQUENCE [LARGE SCALE GENOMIC DNA]</scope>
    <source>
        <strain>972 / ATCC 24843</strain>
    </source>
</reference>
<dbReference type="EMBL" id="X94124">
    <property type="protein sequence ID" value="CAA63844.1"/>
    <property type="molecule type" value="mRNA"/>
</dbReference>
<dbReference type="EMBL" id="CU329671">
    <property type="protein sequence ID" value="CAB83161.1"/>
    <property type="molecule type" value="Genomic_DNA"/>
</dbReference>
<dbReference type="PIR" id="T43703">
    <property type="entry name" value="T43703"/>
</dbReference>
<dbReference type="PIR" id="T50311">
    <property type="entry name" value="T50311"/>
</dbReference>
<dbReference type="RefSeq" id="NP_596177.1">
    <property type="nucleotide sequence ID" value="NM_001022096.2"/>
</dbReference>
<dbReference type="BioGRID" id="276361">
    <property type="interactions" value="2"/>
</dbReference>
<dbReference type="FunCoup" id="O43092">
    <property type="interactions" value="366"/>
</dbReference>
<dbReference type="STRING" id="284812.O43092"/>
<dbReference type="PaxDb" id="4896-SPBP4H10.03.1"/>
<dbReference type="EnsemblFungi" id="SPBP4H10.03.1">
    <property type="protein sequence ID" value="SPBP4H10.03.1:pep"/>
    <property type="gene ID" value="SPBP4H10.03"/>
</dbReference>
<dbReference type="GeneID" id="2539811"/>
<dbReference type="KEGG" id="spo:2539811"/>
<dbReference type="PomBase" id="SPBP4H10.03">
    <property type="gene designation" value="oxa102"/>
</dbReference>
<dbReference type="VEuPathDB" id="FungiDB:SPBP4H10.03"/>
<dbReference type="eggNOG" id="KOG1239">
    <property type="taxonomic scope" value="Eukaryota"/>
</dbReference>
<dbReference type="HOGENOM" id="CLU_029282_3_2_1"/>
<dbReference type="InParanoid" id="O43092"/>
<dbReference type="OMA" id="FPMAIFM"/>
<dbReference type="PhylomeDB" id="O43092"/>
<dbReference type="PRO" id="PR:O43092"/>
<dbReference type="Proteomes" id="UP000002485">
    <property type="component" value="Chromosome II"/>
</dbReference>
<dbReference type="GO" id="GO:0005743">
    <property type="term" value="C:mitochondrial inner membrane"/>
    <property type="evidence" value="ECO:0000318"/>
    <property type="project" value="GO_Central"/>
</dbReference>
<dbReference type="GO" id="GO:0005739">
    <property type="term" value="C:mitochondrion"/>
    <property type="evidence" value="ECO:0007005"/>
    <property type="project" value="PomBase"/>
</dbReference>
<dbReference type="GO" id="GO:0032977">
    <property type="term" value="F:membrane insertase activity"/>
    <property type="evidence" value="ECO:0000318"/>
    <property type="project" value="GO_Central"/>
</dbReference>
<dbReference type="GO" id="GO:0032979">
    <property type="term" value="P:protein insertion into mitochondrial inner membrane from matrix"/>
    <property type="evidence" value="ECO:0000318"/>
    <property type="project" value="GO_Central"/>
</dbReference>
<dbReference type="CDD" id="cd20069">
    <property type="entry name" value="5TM_Oxa1-like"/>
    <property type="match status" value="1"/>
</dbReference>
<dbReference type="InterPro" id="IPR001708">
    <property type="entry name" value="YidC/ALB3/OXA1/COX18"/>
</dbReference>
<dbReference type="InterPro" id="IPR028055">
    <property type="entry name" value="YidC/Oxa/ALB_C"/>
</dbReference>
<dbReference type="PANTHER" id="PTHR12428:SF63">
    <property type="entry name" value="MITOCHONDRIAL INNER MEMBRANE PROTEIN OXA1-2"/>
    <property type="match status" value="1"/>
</dbReference>
<dbReference type="PANTHER" id="PTHR12428">
    <property type="entry name" value="OXA1"/>
    <property type="match status" value="1"/>
</dbReference>
<dbReference type="Pfam" id="PF02096">
    <property type="entry name" value="60KD_IMP"/>
    <property type="match status" value="1"/>
</dbReference>
<proteinExistence type="evidence at transcript level"/>
<feature type="transit peptide" description="Mitochondrion" evidence="1">
    <location>
        <begin position="1"/>
        <end status="unknown"/>
    </location>
</feature>
<feature type="chain" id="PRO_0000020359" description="Mitochondrial inner membrane protein oxa1-2">
    <location>
        <begin status="unknown"/>
        <end position="409"/>
    </location>
</feature>
<feature type="topological domain" description="Mitochondrial matrix" evidence="1">
    <location>
        <begin status="unknown"/>
        <end position="75"/>
    </location>
</feature>
<feature type="transmembrane region" description="Helical" evidence="1">
    <location>
        <begin position="76"/>
        <end position="96"/>
    </location>
</feature>
<feature type="topological domain" description="Mitochondrial intermembrane" evidence="1">
    <location>
        <begin position="97"/>
        <end position="114"/>
    </location>
</feature>
<feature type="transmembrane region" description="Helical" evidence="1">
    <location>
        <begin position="115"/>
        <end position="135"/>
    </location>
</feature>
<feature type="topological domain" description="Mitochondrial matrix" evidence="1">
    <location>
        <begin position="136"/>
        <end position="188"/>
    </location>
</feature>
<feature type="transmembrane region" description="Helical" evidence="1">
    <location>
        <begin position="189"/>
        <end position="209"/>
    </location>
</feature>
<feature type="topological domain" description="Mitochondrial intermembrane" evidence="1">
    <location>
        <begin position="210"/>
        <end position="235"/>
    </location>
</feature>
<feature type="transmembrane region" description="Helical" evidence="1">
    <location>
        <begin position="236"/>
        <end position="256"/>
    </location>
</feature>
<feature type="topological domain" description="Mitochondrial matrix" evidence="1">
    <location>
        <begin position="257"/>
        <end position="275"/>
    </location>
</feature>
<feature type="transmembrane region" description="Helical" evidence="1">
    <location>
        <begin position="276"/>
        <end position="296"/>
    </location>
</feature>
<feature type="topological domain" description="Mitochondrial intermembrane" evidence="1">
    <location>
        <begin position="297"/>
        <end position="409"/>
    </location>
</feature>
<feature type="region of interest" description="Disordered" evidence="2">
    <location>
        <begin position="369"/>
        <end position="409"/>
    </location>
</feature>
<feature type="compositionally biased region" description="Polar residues" evidence="2">
    <location>
        <begin position="374"/>
        <end position="403"/>
    </location>
</feature>
<feature type="sequence conflict" description="In Ref. 1; CAA63844." evidence="4" ref="1">
    <original>E</original>
    <variation>V</variation>
    <location>
        <position position="350"/>
    </location>
</feature>